<dbReference type="EC" id="2.3.1.-" evidence="6"/>
<dbReference type="EMBL" id="ADOT01000316">
    <property type="protein sequence ID" value="EGX43537.1"/>
    <property type="molecule type" value="Genomic_DNA"/>
</dbReference>
<dbReference type="RefSeq" id="XP_011127777.1">
    <property type="nucleotide sequence ID" value="XM_011129475.1"/>
</dbReference>
<dbReference type="STRING" id="756982.G1XTZ4"/>
<dbReference type="GeneID" id="22898683"/>
<dbReference type="eggNOG" id="ENOG502SS2Q">
    <property type="taxonomic scope" value="Eukaryota"/>
</dbReference>
<dbReference type="HOGENOM" id="CLU_032731_1_1_1"/>
<dbReference type="InParanoid" id="G1XTZ4"/>
<dbReference type="OrthoDB" id="1866226at4890"/>
<dbReference type="UniPathway" id="UPA00213"/>
<dbReference type="Proteomes" id="UP000008784">
    <property type="component" value="Unassembled WGS sequence"/>
</dbReference>
<dbReference type="GO" id="GO:0016020">
    <property type="term" value="C:membrane"/>
    <property type="evidence" value="ECO:0007669"/>
    <property type="project" value="UniProtKB-SubCell"/>
</dbReference>
<dbReference type="GO" id="GO:0008374">
    <property type="term" value="F:O-acyltransferase activity"/>
    <property type="evidence" value="ECO:0007669"/>
    <property type="project" value="InterPro"/>
</dbReference>
<dbReference type="GO" id="GO:0016114">
    <property type="term" value="P:terpenoid biosynthetic process"/>
    <property type="evidence" value="ECO:0007669"/>
    <property type="project" value="UniProtKB-UniPathway"/>
</dbReference>
<dbReference type="InterPro" id="IPR044851">
    <property type="entry name" value="Wax_synthase"/>
</dbReference>
<dbReference type="InterPro" id="IPR032805">
    <property type="entry name" value="Wax_synthase_dom"/>
</dbReference>
<dbReference type="PANTHER" id="PTHR31595">
    <property type="entry name" value="LONG-CHAIN-ALCOHOL O-FATTY-ACYLTRANSFERASE 3-RELATED"/>
    <property type="match status" value="1"/>
</dbReference>
<dbReference type="PANTHER" id="PTHR31595:SF57">
    <property type="entry name" value="OS04G0481900 PROTEIN"/>
    <property type="match status" value="1"/>
</dbReference>
<dbReference type="Pfam" id="PF13813">
    <property type="entry name" value="MBOAT_2"/>
    <property type="match status" value="1"/>
</dbReference>
<evidence type="ECO:0000255" key="1"/>
<evidence type="ECO:0000269" key="2">
    <source>
    </source>
</evidence>
<evidence type="ECO:0000269" key="3">
    <source>
    </source>
</evidence>
<evidence type="ECO:0000269" key="4">
    <source>
    </source>
</evidence>
<evidence type="ECO:0000303" key="5">
    <source>
    </source>
</evidence>
<evidence type="ECO:0000305" key="6"/>
<evidence type="ECO:0000305" key="7">
    <source>
    </source>
</evidence>
<accession>G1XTZ4</accession>
<reference key="1">
    <citation type="journal article" date="2011" name="PLoS Pathog.">
        <title>Genomic and proteomic analyses of the fungus Arthrobotrys oligospora provide insights into nematode-trap formation.</title>
        <authorList>
            <person name="Yang J."/>
            <person name="Wang L."/>
            <person name="Ji X."/>
            <person name="Feng Y."/>
            <person name="Li X."/>
            <person name="Zou C."/>
            <person name="Xu J."/>
            <person name="Ren Y."/>
            <person name="Mi Q."/>
            <person name="Wu J."/>
            <person name="Liu S."/>
            <person name="Liu Y."/>
            <person name="Huang X."/>
            <person name="Wang H."/>
            <person name="Niu X."/>
            <person name="Li J."/>
            <person name="Liang L."/>
            <person name="Luo Y."/>
            <person name="Ji K."/>
            <person name="Zhou W."/>
            <person name="Yu Z."/>
            <person name="Li G."/>
            <person name="Liu Y."/>
            <person name="Li L."/>
            <person name="Qiao M."/>
            <person name="Feng L."/>
            <person name="Zhang K.-Q."/>
        </authorList>
    </citation>
    <scope>NUCLEOTIDE SEQUENCE [LARGE SCALE GENOMIC DNA]</scope>
    <source>
        <strain>ATCC 24927 / CBS 115.81 / DSM 1491</strain>
    </source>
</reference>
<reference key="2">
    <citation type="journal article" date="2021" name="J. Agric. Food Chem.">
        <title>Polyketide synthase-terpenoid synthase hybrid pathway regulation of trap formation through ammonia metabolism controls soil colonization of predominant nematode-trapping fungus.</title>
        <authorList>
            <person name="He Z.Q."/>
            <person name="Wang L.J."/>
            <person name="Wang Y.J."/>
            <person name="Chen Y.H."/>
            <person name="Wen Y."/>
            <person name="Zhang K.Q."/>
            <person name="Niu X.M."/>
        </authorList>
    </citation>
    <scope>FUNCTION</scope>
    <scope>DISRUPTION PHENOTYPE</scope>
    <scope>PATHWAY</scope>
</reference>
<reference key="3">
    <citation type="journal article" date="2022" name="J. Fungi">
        <title>The multifaceted gene 275 embedded in the PKS-PTS gene cluster was involved in the regulation of arthrobotrisin biosynthesis, TCA cycle, and septa formation in nematode-trapping fungus Arthrobotrys oligospora.</title>
        <authorList>
            <person name="Zhou J."/>
            <person name="Wu Q.F."/>
            <person name="Li S.H."/>
            <person name="Yan J.X."/>
            <person name="Wu L."/>
            <person name="Cheng Q.Y."/>
            <person name="He Z.Q."/>
            <person name="Yue X.T."/>
            <person name="Zhang K.Q."/>
            <person name="Zhang L.L."/>
            <person name="Niu X.M."/>
        </authorList>
    </citation>
    <scope>INDUCTION</scope>
</reference>
<reference key="4">
    <citation type="journal article" date="2025" name="J. Adv. Res.">
        <title>Identification of a transcription factor AoMsn2 of the Hog1 signaling pathway contributes to fungal growth, development and pathogenicity in Arthrobotrys oligospora.</title>
        <authorList>
            <person name="Liu Q."/>
            <person name="Jiang K."/>
            <person name="Duan S."/>
            <person name="Zhao N."/>
            <person name="Shen Y."/>
            <person name="Zhu L."/>
            <person name="Zhang K.Q."/>
            <person name="Yang J."/>
        </authorList>
    </citation>
    <scope>INDUCTION</scope>
</reference>
<gene>
    <name type="ORF">AOL_s00215g273</name>
</gene>
<proteinExistence type="evidence at transcript level"/>
<comment type="function">
    <text evidence="2 7">Acetyltransferase; part of the gene cluster that mediates the biosynthesis of sesquiterpenyl epoxy-cyclohexenoids (SECs) such as anthrobotrisins and arthrosporols, metabolites that possess a novel hybrid carbon skeleton consisting of a polyketide-derived epoxycyclohexenol combined with a terpenoid-derived monocyclic sesquiterpenol substructure (PKS-PTS hybrid) (PubMed:33823587). The SEC pathway plays an important role for fungal soil colonization via decreasing fungal nematode-capturing ability (PubMed:33823587). The role of the acetyltransferase in SEC biosynthesis has still to be determined (Probable). The pathway begins with the biosynthesis of 6-methylsalicylic acid (6-MSA), the first precursor of the polyketide-derived epoxycyclohexenol in arthrosporols, by the polyketide synthase (PKS) AOL_s00215g283 via condensation of 1 acetate and 3 malonate units. The 6-methylsalicylic acid decarboxylase AOL_s00215g281 then catalyzes the decarboxylation of 6-methylsalicylic acid to yield m-cresol. The cytochrome P450 monooxygenase AOL_s00215g282 further oxidizes m-cresol to yield toluquinol. With the assistance of the oxidoreductase AOL_s00215g277, the polyprenyl transferase AOL_s00215g276 catalyzes the farnesylation of toluquinol to produce farnesyl hydroquinone, the hybrid precursor for biosynthesis of SECs. Farnesyl hydroquinone undergoes epoxidation and then subsequent dehydrogenation to form farnesyl epoxy-quinone, the first and simplest SEC. The cytochrome P450 monooxygenase AOL_s00215g278 and the FAD-dependent monooxygenase AOL_s00215g279 might be involved in the oxygenation of the phenol moiety, most likely in the epoxy formation. The cytochrome P450 monooxygenases AOL_s00215g274 and AOL_s00215g280 are involved in specific regional ketone reductions at respectively C-4 and C-1 of farnesyl epoxy-quinone PubMed:33823587 (Probable).</text>
</comment>
<comment type="pathway">
    <text evidence="7">Secondary metabolite biosynthesis; terpenoid biosynthesis.</text>
</comment>
<comment type="subcellular location">
    <subcellularLocation>
        <location evidence="1">Membrane</location>
        <topology evidence="1">Multi-pass membrane protein</topology>
    </subcellularLocation>
</comment>
<comment type="induction">
    <text evidence="3 4">Expression is down-regulated by the cluster-specific transcription factor AOL_s00215g275 (PubMed:36547594). Expression is also down-regulated by the HOG1-MAPK pathway downstream transcription factor MSN2 (PubMed:38331317).</text>
</comment>
<comment type="disruption phenotype">
    <text evidence="2">Does not lead to any change in metabolic profile of A.oligospora grown on PDB.</text>
</comment>
<comment type="similarity">
    <text evidence="6">Belongs to the wax synthase family.</text>
</comment>
<protein>
    <recommendedName>
        <fullName evidence="5">Acetyltransferase AOL_s00215g273</fullName>
        <ecNumber evidence="6">2.3.1.-</ecNumber>
    </recommendedName>
    <alternativeName>
        <fullName evidence="5">Sesquiterpenyl epoxy-cyclohexenoids cluster protein AOL_s00215g273</fullName>
        <shortName evidence="5">SECs cluster protein AOL_s00215g273</shortName>
    </alternativeName>
</protein>
<keyword id="KW-0012">Acyltransferase</keyword>
<keyword id="KW-0472">Membrane</keyword>
<keyword id="KW-1185">Reference proteome</keyword>
<keyword id="KW-0808">Transferase</keyword>
<keyword id="KW-0812">Transmembrane</keyword>
<keyword id="KW-1133">Transmembrane helix</keyword>
<sequence>MFENTLQGALIGVTVIPTLILSLPTTSFVRYAIYPLPALLVLRALLWPPTEGLAKETYLLGLLMTDTSFKMFDYLYLQGYNAPAKFLQVDRVGRTITKVHEYPKDTLGQVKWALSLVTSHRGIGWNIQVPLQKIKYPSSRVAYIFESMVSILSIYLGLYTCGSLCDYMVQVLRKEADSPYPWVYGLFKNSIFQMVVAFMGIFAMVSNSVLVYNLARMICVTSGIKGDWGKIESWPNMFGGFEDAWSIRNVWGRAWHQNLRRCLTAPGEKVSSLIFGSSPKLGRVPRLIRRYFLVFSAFGVSGLLHSLAVYYGSKTDTMPYEDSTPLHMRPGWYVTGYFFYIQPFAITLEDFICWATGTSTESKGVKATKVRWFVGMVYTLTWFTWGTAVLWIHPQLASLGYQRTSDAELGYVHILVSTSEAASILPLNPWPAVVKTVSPTFWDVYGYFKSSGLGGYLYLYAYTTLEILGGSGFNVLKSASSVV</sequence>
<organism>
    <name type="scientific">Arthrobotrys oligospora (strain ATCC 24927 / CBS 115.81 / DSM 1491)</name>
    <name type="common">Nematode-trapping fungus</name>
    <name type="synonym">Didymozoophaga oligospora</name>
    <dbReference type="NCBI Taxonomy" id="756982"/>
    <lineage>
        <taxon>Eukaryota</taxon>
        <taxon>Fungi</taxon>
        <taxon>Dikarya</taxon>
        <taxon>Ascomycota</taxon>
        <taxon>Pezizomycotina</taxon>
        <taxon>Orbiliomycetes</taxon>
        <taxon>Orbiliales</taxon>
        <taxon>Orbiliaceae</taxon>
        <taxon>Orbilia</taxon>
        <taxon>Orbilia oligospora</taxon>
    </lineage>
</organism>
<feature type="chain" id="PRO_0000457840" description="Acetyltransferase AOL_s00215g273">
    <location>
        <begin position="1"/>
        <end position="483"/>
    </location>
</feature>
<feature type="transmembrane region" description="Helical" evidence="1">
    <location>
        <begin position="9"/>
        <end position="29"/>
    </location>
</feature>
<feature type="transmembrane region" description="Helical" evidence="1">
    <location>
        <begin position="33"/>
        <end position="53"/>
    </location>
</feature>
<feature type="transmembrane region" description="Helical" evidence="1">
    <location>
        <begin position="141"/>
        <end position="161"/>
    </location>
</feature>
<feature type="transmembrane region" description="Helical" evidence="1">
    <location>
        <begin position="191"/>
        <end position="211"/>
    </location>
</feature>
<feature type="transmembrane region" description="Helical" evidence="1">
    <location>
        <begin position="292"/>
        <end position="312"/>
    </location>
</feature>
<feature type="transmembrane region" description="Helical" evidence="1">
    <location>
        <begin position="334"/>
        <end position="354"/>
    </location>
</feature>
<feature type="transmembrane region" description="Helical" evidence="1">
    <location>
        <begin position="372"/>
        <end position="392"/>
    </location>
</feature>
<feature type="transmembrane region" description="Helical" evidence="1">
    <location>
        <begin position="453"/>
        <end position="473"/>
    </location>
</feature>
<name>AR273_ARTOA</name>